<proteinExistence type="evidence at transcript level"/>
<feature type="chain" id="PRO_0000350834" description="Heat stress transcription factor B-2a">
    <location>
        <begin position="1"/>
        <end position="305"/>
    </location>
</feature>
<feature type="region of interest" description="Disordered" evidence="3">
    <location>
        <begin position="97"/>
        <end position="144"/>
    </location>
</feature>
<feature type="region of interest" description="Hydrophobic repeat HR-A/B">
    <location>
        <begin position="164"/>
        <end position="193"/>
    </location>
</feature>
<feature type="region of interest" description="Disordered" evidence="3">
    <location>
        <begin position="192"/>
        <end position="278"/>
    </location>
</feature>
<feature type="coiled-coil region" evidence="2">
    <location>
        <begin position="147"/>
        <end position="187"/>
    </location>
</feature>
<feature type="short sequence motif" description="Nuclear localization signal" evidence="2">
    <location>
        <begin position="268"/>
        <end position="271"/>
    </location>
</feature>
<feature type="short sequence motif" description="Nuclear export signal" evidence="2">
    <location>
        <begin position="275"/>
        <end position="285"/>
    </location>
</feature>
<feature type="compositionally biased region" description="Low complexity" evidence="3">
    <location>
        <begin position="110"/>
        <end position="131"/>
    </location>
</feature>
<feature type="compositionally biased region" description="Acidic residues" evidence="3">
    <location>
        <begin position="226"/>
        <end position="253"/>
    </location>
</feature>
<feature type="compositionally biased region" description="Basic and acidic residues" evidence="3">
    <location>
        <begin position="263"/>
        <end position="274"/>
    </location>
</feature>
<organism>
    <name type="scientific">Oryza sativa subsp. japonica</name>
    <name type="common">Rice</name>
    <dbReference type="NCBI Taxonomy" id="39947"/>
    <lineage>
        <taxon>Eukaryota</taxon>
        <taxon>Viridiplantae</taxon>
        <taxon>Streptophyta</taxon>
        <taxon>Embryophyta</taxon>
        <taxon>Tracheophyta</taxon>
        <taxon>Spermatophyta</taxon>
        <taxon>Magnoliopsida</taxon>
        <taxon>Liliopsida</taxon>
        <taxon>Poales</taxon>
        <taxon>Poaceae</taxon>
        <taxon>BOP clade</taxon>
        <taxon>Oryzoideae</taxon>
        <taxon>Oryzeae</taxon>
        <taxon>Oryzinae</taxon>
        <taxon>Oryza</taxon>
        <taxon>Oryza sativa</taxon>
    </lineage>
</organism>
<keyword id="KW-0175">Coiled coil</keyword>
<keyword id="KW-0963">Cytoplasm</keyword>
<keyword id="KW-0238">DNA-binding</keyword>
<keyword id="KW-0539">Nucleus</keyword>
<keyword id="KW-0597">Phosphoprotein</keyword>
<keyword id="KW-1185">Reference proteome</keyword>
<keyword id="KW-0346">Stress response</keyword>
<keyword id="KW-0804">Transcription</keyword>
<keyword id="KW-0805">Transcription regulation</keyword>
<dbReference type="EMBL" id="AY344483">
    <property type="protein sequence ID" value="AAQ23055.1"/>
    <property type="status" value="ALT_INIT"/>
    <property type="molecule type" value="mRNA"/>
</dbReference>
<dbReference type="EMBL" id="AL663003">
    <property type="protein sequence ID" value="CAE02248.2"/>
    <property type="molecule type" value="Genomic_DNA"/>
</dbReference>
<dbReference type="EMBL" id="AP008210">
    <property type="protein sequence ID" value="BAF15505.1"/>
    <property type="molecule type" value="Genomic_DNA"/>
</dbReference>
<dbReference type="EMBL" id="AP014960">
    <property type="protein sequence ID" value="BAS90550.1"/>
    <property type="molecule type" value="Genomic_DNA"/>
</dbReference>
<dbReference type="RefSeq" id="XP_015636018.1">
    <property type="nucleotide sequence ID" value="XM_015780532.1"/>
</dbReference>
<dbReference type="SMR" id="Q7XRX3"/>
<dbReference type="FunCoup" id="Q7XRX3">
    <property type="interactions" value="307"/>
</dbReference>
<dbReference type="STRING" id="39947.Q7XRX3"/>
<dbReference type="PaxDb" id="39947-Q7XRX3"/>
<dbReference type="EnsemblPlants" id="Os04t0568700-00">
    <property type="protein sequence ID" value="Os04t0568700-00"/>
    <property type="gene ID" value="Os04g0568700"/>
</dbReference>
<dbReference type="Gramene" id="Os04t0568700-00">
    <property type="protein sequence ID" value="Os04t0568700-00"/>
    <property type="gene ID" value="Os04g0568700"/>
</dbReference>
<dbReference type="KEGG" id="dosa:Os04g0568700"/>
<dbReference type="eggNOG" id="KOG0627">
    <property type="taxonomic scope" value="Eukaryota"/>
</dbReference>
<dbReference type="HOGENOM" id="CLU_030308_3_2_1"/>
<dbReference type="InParanoid" id="Q7XRX3"/>
<dbReference type="OMA" id="MKSICDN"/>
<dbReference type="OrthoDB" id="60033at2759"/>
<dbReference type="PlantReactome" id="R-OSA-6788019">
    <property type="pathway name" value="Salicylic acid signaling"/>
</dbReference>
<dbReference type="Proteomes" id="UP000000763">
    <property type="component" value="Chromosome 4"/>
</dbReference>
<dbReference type="Proteomes" id="UP000059680">
    <property type="component" value="Chromosome 4"/>
</dbReference>
<dbReference type="GO" id="GO:0005737">
    <property type="term" value="C:cytoplasm"/>
    <property type="evidence" value="ECO:0007669"/>
    <property type="project" value="UniProtKB-SubCell"/>
</dbReference>
<dbReference type="GO" id="GO:0005634">
    <property type="term" value="C:nucleus"/>
    <property type="evidence" value="ECO:0000318"/>
    <property type="project" value="GO_Central"/>
</dbReference>
<dbReference type="GO" id="GO:0003700">
    <property type="term" value="F:DNA-binding transcription factor activity"/>
    <property type="evidence" value="ECO:0000318"/>
    <property type="project" value="GO_Central"/>
</dbReference>
<dbReference type="GO" id="GO:0043565">
    <property type="term" value="F:sequence-specific DNA binding"/>
    <property type="evidence" value="ECO:0007669"/>
    <property type="project" value="InterPro"/>
</dbReference>
<dbReference type="GO" id="GO:0006357">
    <property type="term" value="P:regulation of transcription by RNA polymerase II"/>
    <property type="evidence" value="ECO:0000318"/>
    <property type="project" value="GO_Central"/>
</dbReference>
<dbReference type="FunFam" id="1.10.10.10:FF:000037">
    <property type="entry name" value="Heat stress transcription factor B-4"/>
    <property type="match status" value="1"/>
</dbReference>
<dbReference type="Gene3D" id="1.10.10.10">
    <property type="entry name" value="Winged helix-like DNA-binding domain superfamily/Winged helix DNA-binding domain"/>
    <property type="match status" value="1"/>
</dbReference>
<dbReference type="InterPro" id="IPR000232">
    <property type="entry name" value="HSF_DNA-bd"/>
</dbReference>
<dbReference type="InterPro" id="IPR036388">
    <property type="entry name" value="WH-like_DNA-bd_sf"/>
</dbReference>
<dbReference type="InterPro" id="IPR036390">
    <property type="entry name" value="WH_DNA-bd_sf"/>
</dbReference>
<dbReference type="PANTHER" id="PTHR10015">
    <property type="entry name" value="HEAT SHOCK TRANSCRIPTION FACTOR"/>
    <property type="match status" value="1"/>
</dbReference>
<dbReference type="PANTHER" id="PTHR10015:SF273">
    <property type="entry name" value="HEAT STRESS TRANSCRIPTION FACTOR B-2A"/>
    <property type="match status" value="1"/>
</dbReference>
<dbReference type="Pfam" id="PF00447">
    <property type="entry name" value="HSF_DNA-bind"/>
    <property type="match status" value="1"/>
</dbReference>
<dbReference type="PRINTS" id="PR00056">
    <property type="entry name" value="HSFDOMAIN"/>
</dbReference>
<dbReference type="SMART" id="SM00415">
    <property type="entry name" value="HSF"/>
    <property type="match status" value="1"/>
</dbReference>
<dbReference type="SUPFAM" id="SSF46785">
    <property type="entry name" value="Winged helix' DNA-binding domain"/>
    <property type="match status" value="1"/>
</dbReference>
<dbReference type="PROSITE" id="PS00434">
    <property type="entry name" value="HSF_DOMAIN"/>
    <property type="match status" value="1"/>
</dbReference>
<sequence>MASPAAGTPPFLTKTYAMVEDPSTDETISWNDSGTAFVVWRPAEFARDLLPKHFKHSNFSSFVRQLNTYGFKKVVADRWEFANDCFRRGEKHLLGGIQRRKGSGTGGAGAAPAGGIPTAIPISSPPTSSGGEPAVSSSPPRGAAGIAAGVSGAVAELEEENARLRRENARLARELARARRVCDGVRRLVSRYDHDHGGGEEEAGEGDVKPMLFGVAIGGKRSREENGEDEEEEEEEGADEDGEDDEVEEDDEERERHAARRVPVREGKVRRTTELSDLDVLALSVRAAAAARPGGASRDRKSSVS</sequence>
<protein>
    <recommendedName>
        <fullName>Heat stress transcription factor B-2a</fullName>
    </recommendedName>
    <alternativeName>
        <fullName>Heat stress transcription factor 1</fullName>
        <shortName>rHsf1</shortName>
    </alternativeName>
    <alternativeName>
        <fullName>Heat stress transcription factor 14</fullName>
        <shortName>OsHsf-14</shortName>
    </alternativeName>
</protein>
<evidence type="ECO:0000250" key="1"/>
<evidence type="ECO:0000255" key="2"/>
<evidence type="ECO:0000256" key="3">
    <source>
        <dbReference type="SAM" id="MobiDB-lite"/>
    </source>
</evidence>
<evidence type="ECO:0000305" key="4"/>
<reference key="1">
    <citation type="submission" date="2003-07" db="EMBL/GenBank/DDBJ databases">
        <title>Isolation rice heat shock factor by modified yeast one-hybrid system method.</title>
        <authorList>
            <person name="Yao Q.-H."/>
            <person name="Peng R.-H."/>
            <person name="Xiong A.-S."/>
        </authorList>
    </citation>
    <scope>NUCLEOTIDE SEQUENCE [MRNA]</scope>
</reference>
<reference key="2">
    <citation type="journal article" date="2002" name="Nature">
        <title>Sequence and analysis of rice chromosome 4.</title>
        <authorList>
            <person name="Feng Q."/>
            <person name="Zhang Y."/>
            <person name="Hao P."/>
            <person name="Wang S."/>
            <person name="Fu G."/>
            <person name="Huang Y."/>
            <person name="Li Y."/>
            <person name="Zhu J."/>
            <person name="Liu Y."/>
            <person name="Hu X."/>
            <person name="Jia P."/>
            <person name="Zhang Y."/>
            <person name="Zhao Q."/>
            <person name="Ying K."/>
            <person name="Yu S."/>
            <person name="Tang Y."/>
            <person name="Weng Q."/>
            <person name="Zhang L."/>
            <person name="Lu Y."/>
            <person name="Mu J."/>
            <person name="Lu Y."/>
            <person name="Zhang L.S."/>
            <person name="Yu Z."/>
            <person name="Fan D."/>
            <person name="Liu X."/>
            <person name="Lu T."/>
            <person name="Li C."/>
            <person name="Wu Y."/>
            <person name="Sun T."/>
            <person name="Lei H."/>
            <person name="Li T."/>
            <person name="Hu H."/>
            <person name="Guan J."/>
            <person name="Wu M."/>
            <person name="Zhang R."/>
            <person name="Zhou B."/>
            <person name="Chen Z."/>
            <person name="Chen L."/>
            <person name="Jin Z."/>
            <person name="Wang R."/>
            <person name="Yin H."/>
            <person name="Cai Z."/>
            <person name="Ren S."/>
            <person name="Lv G."/>
            <person name="Gu W."/>
            <person name="Zhu G."/>
            <person name="Tu Y."/>
            <person name="Jia J."/>
            <person name="Zhang Y."/>
            <person name="Chen J."/>
            <person name="Kang H."/>
            <person name="Chen X."/>
            <person name="Shao C."/>
            <person name="Sun Y."/>
            <person name="Hu Q."/>
            <person name="Zhang X."/>
            <person name="Zhang W."/>
            <person name="Wang L."/>
            <person name="Ding C."/>
            <person name="Sheng H."/>
            <person name="Gu J."/>
            <person name="Chen S."/>
            <person name="Ni L."/>
            <person name="Zhu F."/>
            <person name="Chen W."/>
            <person name="Lan L."/>
            <person name="Lai Y."/>
            <person name="Cheng Z."/>
            <person name="Gu M."/>
            <person name="Jiang J."/>
            <person name="Li J."/>
            <person name="Hong G."/>
            <person name="Xue Y."/>
            <person name="Han B."/>
        </authorList>
    </citation>
    <scope>NUCLEOTIDE SEQUENCE [LARGE SCALE GENOMIC DNA]</scope>
    <source>
        <strain>cv. Nipponbare</strain>
    </source>
</reference>
<reference key="3">
    <citation type="journal article" date="2005" name="Nature">
        <title>The map-based sequence of the rice genome.</title>
        <authorList>
            <consortium name="International rice genome sequencing project (IRGSP)"/>
        </authorList>
    </citation>
    <scope>NUCLEOTIDE SEQUENCE [LARGE SCALE GENOMIC DNA]</scope>
    <source>
        <strain>cv. Nipponbare</strain>
    </source>
</reference>
<reference key="4">
    <citation type="journal article" date="2008" name="Nucleic Acids Res.">
        <title>The rice annotation project database (RAP-DB): 2008 update.</title>
        <authorList>
            <consortium name="The rice annotation project (RAP)"/>
        </authorList>
    </citation>
    <scope>GENOME REANNOTATION</scope>
    <source>
        <strain>cv. Nipponbare</strain>
    </source>
</reference>
<reference key="5">
    <citation type="journal article" date="2013" name="Rice">
        <title>Improvement of the Oryza sativa Nipponbare reference genome using next generation sequence and optical map data.</title>
        <authorList>
            <person name="Kawahara Y."/>
            <person name="de la Bastide M."/>
            <person name="Hamilton J.P."/>
            <person name="Kanamori H."/>
            <person name="McCombie W.R."/>
            <person name="Ouyang S."/>
            <person name="Schwartz D.C."/>
            <person name="Tanaka T."/>
            <person name="Wu J."/>
            <person name="Zhou S."/>
            <person name="Childs K.L."/>
            <person name="Davidson R.M."/>
            <person name="Lin H."/>
            <person name="Quesada-Ocampo L."/>
            <person name="Vaillancourt B."/>
            <person name="Sakai H."/>
            <person name="Lee S.S."/>
            <person name="Kim J."/>
            <person name="Numa H."/>
            <person name="Itoh T."/>
            <person name="Buell C.R."/>
            <person name="Matsumoto T."/>
        </authorList>
    </citation>
    <scope>GENOME REANNOTATION</scope>
    <source>
        <strain>cv. Nipponbare</strain>
    </source>
</reference>
<reference key="6">
    <citation type="journal article" date="2004" name="J. Biosci.">
        <title>Heat stress response in plants: a complex game with chaperones and more than twenty heat stress transcription factors.</title>
        <authorList>
            <person name="Baniwal S.K."/>
            <person name="Bharti K."/>
            <person name="Chan K.Y."/>
            <person name="Fauth M."/>
            <person name="Ganguli A."/>
            <person name="Kotak S."/>
            <person name="Mishra S.K."/>
            <person name="Nover L."/>
            <person name="Port M."/>
            <person name="Scharf K.-D."/>
            <person name="Tripp J."/>
            <person name="Weber C."/>
            <person name="Zielinski D."/>
            <person name="von Koskull-Doering P."/>
        </authorList>
    </citation>
    <scope>GENE FAMILY</scope>
    <scope>NOMENCLATURE</scope>
</reference>
<reference key="7">
    <citation type="journal article" date="2008" name="J. Genet. Genomics">
        <title>Genome-wide analysis of heat shock transcription factor families in rice and Arabidopsis.</title>
        <authorList>
            <person name="Guo J."/>
            <person name="Wu J."/>
            <person name="Ji Q."/>
            <person name="Wang C."/>
            <person name="Luo L."/>
            <person name="Yuan Y."/>
            <person name="Wang Y."/>
            <person name="Wang J."/>
        </authorList>
    </citation>
    <scope>GENE FAMILY</scope>
    <scope>NOMENCLATURE</scope>
</reference>
<name>HFB2A_ORYSJ</name>
<comment type="function">
    <text evidence="1">Transcriptional regulator that specifically binds DNA of heat shock promoter elements (HSE).</text>
</comment>
<comment type="subunit">
    <text evidence="1">Homotrimer.</text>
</comment>
<comment type="subcellular location">
    <subcellularLocation>
        <location evidence="4">Cytoplasm</location>
    </subcellularLocation>
    <subcellularLocation>
        <location evidence="4">Nucleus</location>
    </subcellularLocation>
</comment>
<comment type="domain">
    <text>The hydrophobic-rich region (HR-A/B) corresponds to the oligomerization domain.</text>
</comment>
<comment type="PTM">
    <text evidence="1">Exhibits temperature-dependent phosphorylation.</text>
</comment>
<comment type="similarity">
    <text evidence="4">Belongs to the HSF family. Class B subfamily.</text>
</comment>
<comment type="sequence caution" evidence="4">
    <conflict type="erroneous initiation">
        <sequence resource="EMBL-CDS" id="AAQ23055"/>
    </conflict>
</comment>
<gene>
    <name type="primary">HSFB2A</name>
    <name type="synonym">HSF1</name>
    <name type="synonym">HSF14</name>
    <name type="ordered locus">Os04g0568700</name>
    <name type="ordered locus">LOC_Os04g48030</name>
    <name type="ORF">OSJNBb0032E06.3</name>
</gene>
<accession>Q7XRX3</accession>
<accession>A0A0P0WDN6</accession>
<accession>Q6VBB6</accession>